<gene>
    <name evidence="1" type="primary">ureA</name>
    <name type="ordered locus">TM1040_0387</name>
</gene>
<organism>
    <name type="scientific">Ruegeria sp. (strain TM1040)</name>
    <name type="common">Silicibacter sp.</name>
    <dbReference type="NCBI Taxonomy" id="292414"/>
    <lineage>
        <taxon>Bacteria</taxon>
        <taxon>Pseudomonadati</taxon>
        <taxon>Pseudomonadota</taxon>
        <taxon>Alphaproteobacteria</taxon>
        <taxon>Rhodobacterales</taxon>
        <taxon>Roseobacteraceae</taxon>
        <taxon>Ruegeria</taxon>
    </lineage>
</organism>
<evidence type="ECO:0000255" key="1">
    <source>
        <dbReference type="HAMAP-Rule" id="MF_00739"/>
    </source>
</evidence>
<accession>Q1GJP6</accession>
<protein>
    <recommendedName>
        <fullName evidence="1">Urease subunit gamma</fullName>
        <ecNumber evidence="1">3.5.1.5</ecNumber>
    </recommendedName>
    <alternativeName>
        <fullName evidence="1">Urea amidohydrolase subunit gamma</fullName>
    </alternativeName>
</protein>
<proteinExistence type="inferred from homology"/>
<comment type="catalytic activity">
    <reaction evidence="1">
        <text>urea + 2 H2O + H(+) = hydrogencarbonate + 2 NH4(+)</text>
        <dbReference type="Rhea" id="RHEA:20557"/>
        <dbReference type="ChEBI" id="CHEBI:15377"/>
        <dbReference type="ChEBI" id="CHEBI:15378"/>
        <dbReference type="ChEBI" id="CHEBI:16199"/>
        <dbReference type="ChEBI" id="CHEBI:17544"/>
        <dbReference type="ChEBI" id="CHEBI:28938"/>
        <dbReference type="EC" id="3.5.1.5"/>
    </reaction>
</comment>
<comment type="pathway">
    <text evidence="1">Nitrogen metabolism; urea degradation; CO(2) and NH(3) from urea (urease route): step 1/1.</text>
</comment>
<comment type="subunit">
    <text evidence="1">Heterotrimer of UreA (gamma), UreB (beta) and UreC (alpha) subunits. Three heterotrimers associate to form the active enzyme.</text>
</comment>
<comment type="subcellular location">
    <subcellularLocation>
        <location evidence="1">Cytoplasm</location>
    </subcellularLocation>
</comment>
<comment type="similarity">
    <text evidence="1">Belongs to the urease gamma subunit family.</text>
</comment>
<sequence>MNLTPREKDKLLVAMAAEVARKRLARGVKLNHPEAIALITDAVVEGARDGRSVAEMMQAGAEVITRDQCMSGVAEMIHEVQVEATFPDGTKLVTVHNPIR</sequence>
<keyword id="KW-0963">Cytoplasm</keyword>
<keyword id="KW-0378">Hydrolase</keyword>
<keyword id="KW-1185">Reference proteome</keyword>
<name>URE3_RUEST</name>
<reference key="1">
    <citation type="submission" date="2006-05" db="EMBL/GenBank/DDBJ databases">
        <title>Complete sequence of chromosome of Silicibacter sp. TM1040.</title>
        <authorList>
            <consortium name="US DOE Joint Genome Institute"/>
            <person name="Copeland A."/>
            <person name="Lucas S."/>
            <person name="Lapidus A."/>
            <person name="Barry K."/>
            <person name="Detter J.C."/>
            <person name="Glavina del Rio T."/>
            <person name="Hammon N."/>
            <person name="Israni S."/>
            <person name="Dalin E."/>
            <person name="Tice H."/>
            <person name="Pitluck S."/>
            <person name="Brettin T."/>
            <person name="Bruce D."/>
            <person name="Han C."/>
            <person name="Tapia R."/>
            <person name="Goodwin L."/>
            <person name="Thompson L.S."/>
            <person name="Gilna P."/>
            <person name="Schmutz J."/>
            <person name="Larimer F."/>
            <person name="Land M."/>
            <person name="Hauser L."/>
            <person name="Kyrpides N."/>
            <person name="Kim E."/>
            <person name="Belas R."/>
            <person name="Moran M.A."/>
            <person name="Buchan A."/>
            <person name="Gonzalez J.M."/>
            <person name="Schell M.A."/>
            <person name="Sun F."/>
            <person name="Richardson P."/>
        </authorList>
    </citation>
    <scope>NUCLEOTIDE SEQUENCE [LARGE SCALE GENOMIC DNA]</scope>
    <source>
        <strain>TM1040</strain>
    </source>
</reference>
<dbReference type="EC" id="3.5.1.5" evidence="1"/>
<dbReference type="EMBL" id="CP000377">
    <property type="protein sequence ID" value="ABF63120.1"/>
    <property type="molecule type" value="Genomic_DNA"/>
</dbReference>
<dbReference type="RefSeq" id="WP_011537735.1">
    <property type="nucleotide sequence ID" value="NC_008044.1"/>
</dbReference>
<dbReference type="SMR" id="Q1GJP6"/>
<dbReference type="STRING" id="292414.TM1040_0387"/>
<dbReference type="KEGG" id="sit:TM1040_0387"/>
<dbReference type="eggNOG" id="COG0831">
    <property type="taxonomic scope" value="Bacteria"/>
</dbReference>
<dbReference type="HOGENOM" id="CLU_145825_1_0_5"/>
<dbReference type="OrthoDB" id="9797217at2"/>
<dbReference type="UniPathway" id="UPA00258">
    <property type="reaction ID" value="UER00370"/>
</dbReference>
<dbReference type="Proteomes" id="UP000000636">
    <property type="component" value="Chromosome"/>
</dbReference>
<dbReference type="GO" id="GO:0005737">
    <property type="term" value="C:cytoplasm"/>
    <property type="evidence" value="ECO:0007669"/>
    <property type="project" value="UniProtKB-SubCell"/>
</dbReference>
<dbReference type="GO" id="GO:0016151">
    <property type="term" value="F:nickel cation binding"/>
    <property type="evidence" value="ECO:0007669"/>
    <property type="project" value="InterPro"/>
</dbReference>
<dbReference type="GO" id="GO:0009039">
    <property type="term" value="F:urease activity"/>
    <property type="evidence" value="ECO:0007669"/>
    <property type="project" value="UniProtKB-UniRule"/>
</dbReference>
<dbReference type="GO" id="GO:0043419">
    <property type="term" value="P:urea catabolic process"/>
    <property type="evidence" value="ECO:0007669"/>
    <property type="project" value="UniProtKB-UniRule"/>
</dbReference>
<dbReference type="CDD" id="cd00390">
    <property type="entry name" value="Urease_gamma"/>
    <property type="match status" value="1"/>
</dbReference>
<dbReference type="Gene3D" id="3.30.280.10">
    <property type="entry name" value="Urease, gamma-like subunit"/>
    <property type="match status" value="1"/>
</dbReference>
<dbReference type="HAMAP" id="MF_00739">
    <property type="entry name" value="Urease_gamma"/>
    <property type="match status" value="1"/>
</dbReference>
<dbReference type="InterPro" id="IPR012010">
    <property type="entry name" value="Urease_gamma"/>
</dbReference>
<dbReference type="InterPro" id="IPR002026">
    <property type="entry name" value="Urease_gamma/gamma-beta_su"/>
</dbReference>
<dbReference type="InterPro" id="IPR036463">
    <property type="entry name" value="Urease_gamma_sf"/>
</dbReference>
<dbReference type="InterPro" id="IPR050069">
    <property type="entry name" value="Urease_subunit"/>
</dbReference>
<dbReference type="NCBIfam" id="NF009712">
    <property type="entry name" value="PRK13241.1"/>
    <property type="match status" value="1"/>
</dbReference>
<dbReference type="NCBIfam" id="TIGR00193">
    <property type="entry name" value="urease_gam"/>
    <property type="match status" value="1"/>
</dbReference>
<dbReference type="PANTHER" id="PTHR33569">
    <property type="entry name" value="UREASE"/>
    <property type="match status" value="1"/>
</dbReference>
<dbReference type="PANTHER" id="PTHR33569:SF1">
    <property type="entry name" value="UREASE"/>
    <property type="match status" value="1"/>
</dbReference>
<dbReference type="Pfam" id="PF00547">
    <property type="entry name" value="Urease_gamma"/>
    <property type="match status" value="1"/>
</dbReference>
<dbReference type="PIRSF" id="PIRSF001223">
    <property type="entry name" value="Urease_gamma"/>
    <property type="match status" value="1"/>
</dbReference>
<dbReference type="SUPFAM" id="SSF54111">
    <property type="entry name" value="Urease, gamma-subunit"/>
    <property type="match status" value="1"/>
</dbReference>
<feature type="chain" id="PRO_1000046368" description="Urease subunit gamma">
    <location>
        <begin position="1"/>
        <end position="100"/>
    </location>
</feature>